<accession>P0C458</accession>
<reference key="1">
    <citation type="journal article" date="2004" name="Plant Physiol.">
        <title>A comparison of rice chloroplast genomes.</title>
        <authorList>
            <person name="Tang J."/>
            <person name="Xia H."/>
            <person name="Cao M."/>
            <person name="Zhang X."/>
            <person name="Zeng W."/>
            <person name="Hu S."/>
            <person name="Tong W."/>
            <person name="Wang J."/>
            <person name="Wang J."/>
            <person name="Yu J."/>
            <person name="Yang H."/>
            <person name="Zhu L."/>
        </authorList>
    </citation>
    <scope>NUCLEOTIDE SEQUENCE [LARGE SCALE GENOMIC DNA]</scope>
    <source>
        <strain>cv. PA64s</strain>
    </source>
</reference>
<comment type="subcellular location">
    <subcellularLocation>
        <location>Plastid</location>
        <location>Chloroplast</location>
    </subcellularLocation>
</comment>
<comment type="similarity">
    <text evidence="1">Belongs to the bacterial ribosomal protein bL36 family.</text>
</comment>
<evidence type="ECO:0000305" key="1"/>
<keyword id="KW-0150">Chloroplast</keyword>
<keyword id="KW-0934">Plastid</keyword>
<keyword id="KW-0687">Ribonucleoprotein</keyword>
<keyword id="KW-0689">Ribosomal protein</keyword>
<name>RK36_ORYSA</name>
<organism>
    <name type="scientific">Oryza sativa</name>
    <name type="common">Rice</name>
    <dbReference type="NCBI Taxonomy" id="4530"/>
    <lineage>
        <taxon>Eukaryota</taxon>
        <taxon>Viridiplantae</taxon>
        <taxon>Streptophyta</taxon>
        <taxon>Embryophyta</taxon>
        <taxon>Tracheophyta</taxon>
        <taxon>Spermatophyta</taxon>
        <taxon>Magnoliopsida</taxon>
        <taxon>Liliopsida</taxon>
        <taxon>Poales</taxon>
        <taxon>Poaceae</taxon>
        <taxon>BOP clade</taxon>
        <taxon>Oryzoideae</taxon>
        <taxon>Oryzeae</taxon>
        <taxon>Oryzinae</taxon>
        <taxon>Oryza</taxon>
    </lineage>
</organism>
<geneLocation type="chloroplast"/>
<feature type="chain" id="PRO_0000290055" description="Large ribosomal subunit protein bL36c">
    <location>
        <begin position="1"/>
        <end position="37"/>
    </location>
</feature>
<protein>
    <recommendedName>
        <fullName evidence="1">Large ribosomal subunit protein bL36c</fullName>
    </recommendedName>
    <alternativeName>
        <fullName>50S ribosomal protein L36, chloroplastic</fullName>
    </alternativeName>
</protein>
<sequence length="37" mass="4447">MKIRASVRKICTKCRLIRRRGRIRVICSNPKHKQRQG</sequence>
<gene>
    <name type="primary">rpl36</name>
</gene>
<proteinExistence type="inferred from homology"/>
<dbReference type="EMBL" id="AY522331">
    <property type="status" value="NOT_ANNOTATED_CDS"/>
    <property type="molecule type" value="Genomic_DNA"/>
</dbReference>
<dbReference type="RefSeq" id="YP_009305337.1">
    <property type="nucleotide sequence ID" value="NC_031333.1"/>
</dbReference>
<dbReference type="SMR" id="P0C458"/>
<dbReference type="GeneID" id="29141405"/>
<dbReference type="GO" id="GO:0009507">
    <property type="term" value="C:chloroplast"/>
    <property type="evidence" value="ECO:0007669"/>
    <property type="project" value="UniProtKB-SubCell"/>
</dbReference>
<dbReference type="GO" id="GO:0009536">
    <property type="term" value="C:plastid"/>
    <property type="evidence" value="ECO:0000305"/>
    <property type="project" value="Gramene"/>
</dbReference>
<dbReference type="GO" id="GO:1990904">
    <property type="term" value="C:ribonucleoprotein complex"/>
    <property type="evidence" value="ECO:0007669"/>
    <property type="project" value="UniProtKB-KW"/>
</dbReference>
<dbReference type="GO" id="GO:0005840">
    <property type="term" value="C:ribosome"/>
    <property type="evidence" value="ECO:0007669"/>
    <property type="project" value="UniProtKB-KW"/>
</dbReference>
<dbReference type="GO" id="GO:0003735">
    <property type="term" value="F:structural constituent of ribosome"/>
    <property type="evidence" value="ECO:0007669"/>
    <property type="project" value="InterPro"/>
</dbReference>
<dbReference type="GO" id="GO:0006412">
    <property type="term" value="P:translation"/>
    <property type="evidence" value="ECO:0007669"/>
    <property type="project" value="UniProtKB-UniRule"/>
</dbReference>
<dbReference type="HAMAP" id="MF_00251">
    <property type="entry name" value="Ribosomal_bL36"/>
    <property type="match status" value="1"/>
</dbReference>
<dbReference type="InterPro" id="IPR000473">
    <property type="entry name" value="Ribosomal_bL36"/>
</dbReference>
<dbReference type="InterPro" id="IPR035977">
    <property type="entry name" value="Ribosomal_bL36_sp"/>
</dbReference>
<dbReference type="NCBIfam" id="TIGR01022">
    <property type="entry name" value="rpmJ_bact"/>
    <property type="match status" value="1"/>
</dbReference>
<dbReference type="PANTHER" id="PTHR42888">
    <property type="entry name" value="50S RIBOSOMAL PROTEIN L36, CHLOROPLASTIC"/>
    <property type="match status" value="1"/>
</dbReference>
<dbReference type="PANTHER" id="PTHR42888:SF1">
    <property type="entry name" value="LARGE RIBOSOMAL SUBUNIT PROTEIN BL36C"/>
    <property type="match status" value="1"/>
</dbReference>
<dbReference type="Pfam" id="PF00444">
    <property type="entry name" value="Ribosomal_L36"/>
    <property type="match status" value="1"/>
</dbReference>
<dbReference type="SUPFAM" id="SSF57840">
    <property type="entry name" value="Ribosomal protein L36"/>
    <property type="match status" value="1"/>
</dbReference>
<dbReference type="PROSITE" id="PS00828">
    <property type="entry name" value="RIBOSOMAL_L36"/>
    <property type="match status" value="1"/>
</dbReference>